<proteinExistence type="evidence at protein level"/>
<accession>P9WNI3</accession>
<accession>L0TD27</accession>
<accession>O07932</accession>
<dbReference type="EMBL" id="AL123456">
    <property type="protein sequence ID" value="CCP46443.1"/>
    <property type="molecule type" value="Genomic_DNA"/>
</dbReference>
<dbReference type="PIR" id="E70560">
    <property type="entry name" value="E70560"/>
</dbReference>
<dbReference type="RefSeq" id="NP_218137.1">
    <property type="nucleotide sequence ID" value="NC_000962.3"/>
</dbReference>
<dbReference type="RefSeq" id="WP_003899603.1">
    <property type="nucleotide sequence ID" value="NZ_KK339374.1"/>
</dbReference>
<dbReference type="SMR" id="P9WNI3"/>
<dbReference type="IntAct" id="P9WNI3">
    <property type="interactions" value="1"/>
</dbReference>
<dbReference type="MINT" id="P9WNI3"/>
<dbReference type="STRING" id="83332.Rv3620c"/>
<dbReference type="PaxDb" id="83332-Rv3620c"/>
<dbReference type="GeneID" id="885787"/>
<dbReference type="KEGG" id="mtu:Rv3620c"/>
<dbReference type="KEGG" id="mtv:RVBD_3620c"/>
<dbReference type="TubercuList" id="Rv3620c"/>
<dbReference type="eggNOG" id="COG4842">
    <property type="taxonomic scope" value="Bacteria"/>
</dbReference>
<dbReference type="InParanoid" id="P9WNI3"/>
<dbReference type="OrthoDB" id="4739539at2"/>
<dbReference type="PhylomeDB" id="P9WNI3"/>
<dbReference type="Proteomes" id="UP000001584">
    <property type="component" value="Chromosome"/>
</dbReference>
<dbReference type="GO" id="GO:0005576">
    <property type="term" value="C:extracellular region"/>
    <property type="evidence" value="ECO:0007669"/>
    <property type="project" value="UniProtKB-SubCell"/>
</dbReference>
<dbReference type="FunFam" id="1.10.287.1060:FF:000006">
    <property type="entry name" value="ESAT-6-like protein"/>
    <property type="match status" value="1"/>
</dbReference>
<dbReference type="Gene3D" id="1.10.287.1060">
    <property type="entry name" value="ESAT-6-like"/>
    <property type="match status" value="1"/>
</dbReference>
<dbReference type="InterPro" id="IPR036689">
    <property type="entry name" value="ESAT-6-like_sf"/>
</dbReference>
<dbReference type="InterPro" id="IPR010310">
    <property type="entry name" value="T7SS_ESAT-6-like"/>
</dbReference>
<dbReference type="NCBIfam" id="TIGR03930">
    <property type="entry name" value="WXG100_ESAT6"/>
    <property type="match status" value="1"/>
</dbReference>
<dbReference type="Pfam" id="PF06013">
    <property type="entry name" value="WXG100"/>
    <property type="match status" value="1"/>
</dbReference>
<dbReference type="SUPFAM" id="SSF140453">
    <property type="entry name" value="EsxAB dimer-like"/>
    <property type="match status" value="1"/>
</dbReference>
<keyword id="KW-1185">Reference proteome</keyword>
<keyword id="KW-0964">Secreted</keyword>
<reference key="1">
    <citation type="journal article" date="1998" name="Nature">
        <title>Deciphering the biology of Mycobacterium tuberculosis from the complete genome sequence.</title>
        <authorList>
            <person name="Cole S.T."/>
            <person name="Brosch R."/>
            <person name="Parkhill J."/>
            <person name="Garnier T."/>
            <person name="Churcher C.M."/>
            <person name="Harris D.E."/>
            <person name="Gordon S.V."/>
            <person name="Eiglmeier K."/>
            <person name="Gas S."/>
            <person name="Barry C.E. III"/>
            <person name="Tekaia F."/>
            <person name="Badcock K."/>
            <person name="Basham D."/>
            <person name="Brown D."/>
            <person name="Chillingworth T."/>
            <person name="Connor R."/>
            <person name="Davies R.M."/>
            <person name="Devlin K."/>
            <person name="Feltwell T."/>
            <person name="Gentles S."/>
            <person name="Hamlin N."/>
            <person name="Holroyd S."/>
            <person name="Hornsby T."/>
            <person name="Jagels K."/>
            <person name="Krogh A."/>
            <person name="McLean J."/>
            <person name="Moule S."/>
            <person name="Murphy L.D."/>
            <person name="Oliver S."/>
            <person name="Osborne J."/>
            <person name="Quail M.A."/>
            <person name="Rajandream M.A."/>
            <person name="Rogers J."/>
            <person name="Rutter S."/>
            <person name="Seeger K."/>
            <person name="Skelton S."/>
            <person name="Squares S."/>
            <person name="Squares R."/>
            <person name="Sulston J.E."/>
            <person name="Taylor K."/>
            <person name="Whitehead S."/>
            <person name="Barrell B.G."/>
        </authorList>
    </citation>
    <scope>NUCLEOTIDE SEQUENCE [LARGE SCALE GENOMIC DNA]</scope>
    <source>
        <strain>ATCC 25618 / H37Rv</strain>
    </source>
</reference>
<reference key="2">
    <citation type="journal article" date="2003" name="Microbes Infect.">
        <title>Comparative proteome analysis of culture supernatant proteins of Mycobacterium tuberculosis H37Rv and H37Ra.</title>
        <authorList>
            <person name="He X.Y."/>
            <person name="Zhuang Y.H."/>
            <person name="Zhang X.G."/>
            <person name="Li G.L."/>
        </authorList>
    </citation>
    <scope>IDENTIFICATION BY MASS SPECTROMETRY</scope>
    <scope>SUBCELLULAR LOCATION</scope>
    <source>
        <strain>ATCC 27294 / TMC 102 / H37Rv</strain>
    </source>
</reference>
<reference key="3">
    <citation type="journal article" date="2009" name="PLoS Pathog.">
        <title>Systematic genetic nomenclature for type VII secretion systems.</title>
        <authorList>
            <person name="Bitter W."/>
            <person name="Houben E.N."/>
            <person name="Bottai D."/>
            <person name="Brodin P."/>
            <person name="Brown E.J."/>
            <person name="Cox J.S."/>
            <person name="Derbyshire K."/>
            <person name="Fortune S.M."/>
            <person name="Gao L.Y."/>
            <person name="Liu J."/>
            <person name="Gey van Pittius N.C."/>
            <person name="Pym A.S."/>
            <person name="Rubin E.J."/>
            <person name="Sherman D.R."/>
            <person name="Cole S.T."/>
            <person name="Brosch R."/>
        </authorList>
    </citation>
    <scope>NOMENCLATURE</scope>
</reference>
<reference key="4">
    <citation type="journal article" date="2011" name="FEBS J.">
        <title>Molecular characterization of secretory proteins Rv3619c and Rv3620c from Mycobacterium tuberculosis H37Rv.</title>
        <authorList>
            <person name="Mahmood A."/>
            <person name="Srivastava S."/>
            <person name="Tripathi S."/>
            <person name="Ansari M.A."/>
            <person name="Owais M."/>
            <person name="Arora A."/>
        </authorList>
    </citation>
    <scope>INTERACTION WITH ESXV</scope>
    <scope>SUBCELLULAR LOCATION</scope>
    <source>
        <strain>H37Rv</strain>
    </source>
</reference>
<feature type="chain" id="PRO_0000167816" description="ESAT-6-like protein EsxW">
    <location>
        <begin position="1"/>
        <end position="98"/>
    </location>
</feature>
<sequence length="98" mass="11023">MTSRFMTDPHAMRDMAGRFEVHAQTVEDEARRMWASAQNISGAGWSGMAEATSLDTMTQMNQAFRNIVNMLHGVRDGLVRDANNYEQQEQASQQILSS</sequence>
<protein>
    <recommendedName>
        <fullName evidence="4">ESAT-6-like protein EsxW</fullName>
    </recommendedName>
</protein>
<name>ESXW_MYCTU</name>
<comment type="subunit">
    <text evidence="2">Forms a tight 1:1 complex with EsxV. The complex is destabilized at low pH. Unfolding of the proteins is required for dissociation of the complex and membrane binding.</text>
</comment>
<comment type="interaction">
    <interactant intactId="EBI-8531788">
        <id>P9WNI3</id>
    </interactant>
    <interactant intactId="EBI-8531756">
        <id>P9WNK1</id>
        <label>Rv3619c</label>
    </interactant>
    <organismsDiffer>false</organismsDiffer>
    <experiments>2</experiments>
</comment>
<comment type="subcellular location">
    <subcellularLocation>
        <location evidence="1">Secreted</location>
    </subcellularLocation>
    <text evidence="5 6">Probably secreted via the ESX-5 / type VII secretion system (T7SS) (Probable). May bind to lipid membranes after dissociation of the complex (Probable).</text>
</comment>
<comment type="similarity">
    <text evidence="5">Belongs to the WXG100 family. CFP-10 subfamily.</text>
</comment>
<gene>
    <name evidence="3" type="primary">esxW</name>
    <name type="ordered locus">Rv3620c</name>
    <name type="ORF">MTCY07H7B.02</name>
    <name type="ORF">MTCY15C10.32</name>
</gene>
<organism>
    <name type="scientific">Mycobacterium tuberculosis (strain ATCC 25618 / H37Rv)</name>
    <dbReference type="NCBI Taxonomy" id="83332"/>
    <lineage>
        <taxon>Bacteria</taxon>
        <taxon>Bacillati</taxon>
        <taxon>Actinomycetota</taxon>
        <taxon>Actinomycetes</taxon>
        <taxon>Mycobacteriales</taxon>
        <taxon>Mycobacteriaceae</taxon>
        <taxon>Mycobacterium</taxon>
        <taxon>Mycobacterium tuberculosis complex</taxon>
    </lineage>
</organism>
<evidence type="ECO:0000269" key="1">
    <source>
    </source>
</evidence>
<evidence type="ECO:0000269" key="2">
    <source>
    </source>
</evidence>
<evidence type="ECO:0000303" key="3">
    <source>
    </source>
</evidence>
<evidence type="ECO:0000305" key="4"/>
<evidence type="ECO:0000305" key="5">
    <source>
    </source>
</evidence>
<evidence type="ECO:0000305" key="6">
    <source>
    </source>
</evidence>